<gene>
    <name type="primary">ctaB</name>
    <name type="ordered locus">TTHA0310</name>
</gene>
<keyword id="KW-0997">Cell inner membrane</keyword>
<keyword id="KW-1003">Cell membrane</keyword>
<keyword id="KW-0350">Heme biosynthesis</keyword>
<keyword id="KW-0472">Membrane</keyword>
<keyword id="KW-1185">Reference proteome</keyword>
<keyword id="KW-0808">Transferase</keyword>
<keyword id="KW-0812">Transmembrane</keyword>
<keyword id="KW-1133">Transmembrane helix</keyword>
<proteinExistence type="inferred from homology"/>
<reference key="1">
    <citation type="submission" date="2004-11" db="EMBL/GenBank/DDBJ databases">
        <title>Complete genome sequence of Thermus thermophilus HB8.</title>
        <authorList>
            <person name="Masui R."/>
            <person name="Kurokawa K."/>
            <person name="Nakagawa N."/>
            <person name="Tokunaga F."/>
            <person name="Koyama Y."/>
            <person name="Shibata T."/>
            <person name="Oshima T."/>
            <person name="Yokoyama S."/>
            <person name="Yasunaga T."/>
            <person name="Kuramitsu S."/>
        </authorList>
    </citation>
    <scope>NUCLEOTIDE SEQUENCE [LARGE SCALE GENOMIC DNA]</scope>
    <source>
        <strain>ATCC 27634 / DSM 579 / HB8</strain>
    </source>
</reference>
<comment type="function">
    <text evidence="1">Converts heme B (protoheme IX) to heme O by substitution of the vinyl group on carbon 2 of heme B porphyrin ring with a hydroxyethyl farnesyl side group.</text>
</comment>
<comment type="catalytic activity">
    <reaction>
        <text>heme b + (2E,6E)-farnesyl diphosphate + H2O = Fe(II)-heme o + diphosphate</text>
        <dbReference type="Rhea" id="RHEA:28070"/>
        <dbReference type="ChEBI" id="CHEBI:15377"/>
        <dbReference type="ChEBI" id="CHEBI:33019"/>
        <dbReference type="ChEBI" id="CHEBI:60344"/>
        <dbReference type="ChEBI" id="CHEBI:60530"/>
        <dbReference type="ChEBI" id="CHEBI:175763"/>
        <dbReference type="EC" id="2.5.1.141"/>
    </reaction>
</comment>
<comment type="pathway">
    <text>Porphyrin-containing compound metabolism; heme O biosynthesis; heme O from protoheme: step 1/1.</text>
</comment>
<comment type="subcellular location">
    <subcellularLocation>
        <location evidence="3">Cell inner membrane</location>
        <topology evidence="3">Multi-pass membrane protein</topology>
    </subcellularLocation>
</comment>
<comment type="miscellaneous">
    <text evidence="1">Carbon 2 of the heme B porphyrin ring is defined according to the Fischer nomenclature.</text>
</comment>
<comment type="similarity">
    <text evidence="3">In the N-terminal section; belongs to the COX15/CtaA family.</text>
</comment>
<comment type="similarity">
    <text evidence="3">In the C-terminal section; belongs to the UbiA prenyltransferase family. Protoheme IX farnesyltransferase subfamily.</text>
</comment>
<protein>
    <recommendedName>
        <fullName>Protoheme IX farnesyltransferase</fullName>
        <ecNumber>2.5.1.141</ecNumber>
    </recommendedName>
    <alternativeName>
        <fullName>Heme B farnesyltransferase</fullName>
    </alternativeName>
    <alternativeName>
        <fullName>Heme O synthase</fullName>
    </alternativeName>
</protein>
<dbReference type="EC" id="2.5.1.141"/>
<dbReference type="EMBL" id="AP008226">
    <property type="protein sequence ID" value="BAD70133.1"/>
    <property type="molecule type" value="Genomic_DNA"/>
</dbReference>
<dbReference type="RefSeq" id="WP_011227849.1">
    <property type="nucleotide sequence ID" value="NC_006461.1"/>
</dbReference>
<dbReference type="RefSeq" id="YP_143576.1">
    <property type="nucleotide sequence ID" value="NC_006461.1"/>
</dbReference>
<dbReference type="SMR" id="Q5SLI3"/>
<dbReference type="EnsemblBacteria" id="BAD70133">
    <property type="protein sequence ID" value="BAD70133"/>
    <property type="gene ID" value="BAD70133"/>
</dbReference>
<dbReference type="GeneID" id="3169720"/>
<dbReference type="KEGG" id="ttj:TTHA0310"/>
<dbReference type="PATRIC" id="fig|300852.9.peg.310"/>
<dbReference type="eggNOG" id="COG0109">
    <property type="taxonomic scope" value="Bacteria"/>
</dbReference>
<dbReference type="eggNOG" id="COG1612">
    <property type="taxonomic scope" value="Bacteria"/>
</dbReference>
<dbReference type="HOGENOM" id="CLU_030009_0_0_0"/>
<dbReference type="UniPathway" id="UPA00834">
    <property type="reaction ID" value="UER00712"/>
</dbReference>
<dbReference type="Proteomes" id="UP000000532">
    <property type="component" value="Chromosome"/>
</dbReference>
<dbReference type="GO" id="GO:0005886">
    <property type="term" value="C:plasma membrane"/>
    <property type="evidence" value="ECO:0007669"/>
    <property type="project" value="UniProtKB-SubCell"/>
</dbReference>
<dbReference type="GO" id="GO:0016653">
    <property type="term" value="F:oxidoreductase activity, acting on NAD(P)H, heme protein as acceptor"/>
    <property type="evidence" value="ECO:0007669"/>
    <property type="project" value="InterPro"/>
</dbReference>
<dbReference type="GO" id="GO:0008495">
    <property type="term" value="F:protoheme IX farnesyltransferase activity"/>
    <property type="evidence" value="ECO:0007669"/>
    <property type="project" value="UniProtKB-UniRule"/>
</dbReference>
<dbReference type="GO" id="GO:0006784">
    <property type="term" value="P:heme A biosynthetic process"/>
    <property type="evidence" value="ECO:0007669"/>
    <property type="project" value="InterPro"/>
</dbReference>
<dbReference type="GO" id="GO:0048034">
    <property type="term" value="P:heme O biosynthetic process"/>
    <property type="evidence" value="ECO:0007669"/>
    <property type="project" value="UniProtKB-UniRule"/>
</dbReference>
<dbReference type="CDD" id="cd13957">
    <property type="entry name" value="PT_UbiA_Cox10"/>
    <property type="match status" value="1"/>
</dbReference>
<dbReference type="FunFam" id="1.10.357.140:FF:000001">
    <property type="entry name" value="Protoheme IX farnesyltransferase"/>
    <property type="match status" value="1"/>
</dbReference>
<dbReference type="Gene3D" id="1.10.357.140">
    <property type="entry name" value="UbiA prenyltransferase"/>
    <property type="match status" value="1"/>
</dbReference>
<dbReference type="HAMAP" id="MF_00154">
    <property type="entry name" value="CyoE_CtaB"/>
    <property type="match status" value="1"/>
</dbReference>
<dbReference type="InterPro" id="IPR003780">
    <property type="entry name" value="COX15/CtaA_fam"/>
</dbReference>
<dbReference type="InterPro" id="IPR006369">
    <property type="entry name" value="Protohaem_IX_farnesylTrfase"/>
</dbReference>
<dbReference type="InterPro" id="IPR000537">
    <property type="entry name" value="UbiA_prenyltransferase"/>
</dbReference>
<dbReference type="InterPro" id="IPR044878">
    <property type="entry name" value="UbiA_sf"/>
</dbReference>
<dbReference type="NCBIfam" id="TIGR01473">
    <property type="entry name" value="cyoE_ctaB"/>
    <property type="match status" value="1"/>
</dbReference>
<dbReference type="NCBIfam" id="NF003349">
    <property type="entry name" value="PRK04375.1-2"/>
    <property type="match status" value="1"/>
</dbReference>
<dbReference type="PANTHER" id="PTHR43448:SF7">
    <property type="entry name" value="4-HYDROXYBENZOATE SOLANESYLTRANSFERASE"/>
    <property type="match status" value="1"/>
</dbReference>
<dbReference type="PANTHER" id="PTHR43448">
    <property type="entry name" value="PROTOHEME IX FARNESYLTRANSFERASE, MITOCHONDRIAL"/>
    <property type="match status" value="1"/>
</dbReference>
<dbReference type="Pfam" id="PF02628">
    <property type="entry name" value="COX15-CtaA"/>
    <property type="match status" value="1"/>
</dbReference>
<dbReference type="Pfam" id="PF01040">
    <property type="entry name" value="UbiA"/>
    <property type="match status" value="1"/>
</dbReference>
<organism>
    <name type="scientific">Thermus thermophilus (strain ATCC 27634 / DSM 579 / HB8)</name>
    <dbReference type="NCBI Taxonomy" id="300852"/>
    <lineage>
        <taxon>Bacteria</taxon>
        <taxon>Thermotogati</taxon>
        <taxon>Deinococcota</taxon>
        <taxon>Deinococci</taxon>
        <taxon>Thermales</taxon>
        <taxon>Thermaceae</taxon>
        <taxon>Thermus</taxon>
    </lineage>
</organism>
<sequence length="608" mass="65784">MKTPAWSRLAGYAWGVLLWNVLVALFGAYVRATGSGAGCGAHWPTCNGEVIPRAPQVETLIEFTHRATSGLAFLSVLALFLWALRAFPKGHPARFGAGLALFFMVTESLVGASLVLFGWTADNVSRERAVVQMVHLANTYFLLAALALTAWWASGGGPLRLRGQGAVGLALFLGLLALLFLGMSGAVTALGDLLFPVGSTLEALERSLTPGEHFLVRLRVLHPLIAVSVGLYVVFAGYLVAHLRPSPLTRRLAQGLAYLYGAQLLAGLINVALKAPVWMQILHLLLAYAIWLLFVFLATSALERGAKRVELGEGGEAVHRGTGGATWRDYLALTKPRVISLLLFTALFGALIAAKGWPGLGVFLAVALGGYMMAGAANAINMVVDRDIDARMKRTAKRPTVTQRVSSRDALLFAFALAVLGFAVLWWGANLLAATLALMGLIWYVLVYTLYLKRRTWHNIVIGGAAGAFPPLVGWAAVTGELSLFAWYLFALIFFWTPVHFWALALMIQDDYRAVGVPMLPVVLGERATVIQIALYALLTALISLMPLLLGELGLLYLAASLLLNALLLLKSLALYRRPERRTAVSLYKYSMLYLALLFAAMAVDRAV</sequence>
<feature type="chain" id="PRO_0000346082" description="Protoheme IX farnesyltransferase">
    <location>
        <begin position="1"/>
        <end position="608"/>
    </location>
</feature>
<feature type="transmembrane region" description="Helical" evidence="2">
    <location>
        <begin position="10"/>
        <end position="30"/>
    </location>
</feature>
<feature type="transmembrane region" description="Helical" evidence="2">
    <location>
        <begin position="67"/>
        <end position="87"/>
    </location>
</feature>
<feature type="transmembrane region" description="Helical" evidence="2">
    <location>
        <begin position="99"/>
        <end position="119"/>
    </location>
</feature>
<feature type="transmembrane region" description="Helical" evidence="2">
    <location>
        <begin position="139"/>
        <end position="159"/>
    </location>
</feature>
<feature type="transmembrane region" description="Helical" evidence="2">
    <location>
        <begin position="167"/>
        <end position="187"/>
    </location>
</feature>
<feature type="transmembrane region" description="Helical" evidence="2">
    <location>
        <begin position="220"/>
        <end position="240"/>
    </location>
</feature>
<feature type="transmembrane region" description="Helical" evidence="2">
    <location>
        <begin position="252"/>
        <end position="272"/>
    </location>
</feature>
<feature type="transmembrane region" description="Helical" evidence="2">
    <location>
        <begin position="277"/>
        <end position="297"/>
    </location>
</feature>
<feature type="transmembrane region" description="Helical" evidence="2">
    <location>
        <begin position="338"/>
        <end position="357"/>
    </location>
</feature>
<feature type="transmembrane region" description="Helical" evidence="2">
    <location>
        <begin position="362"/>
        <end position="384"/>
    </location>
</feature>
<feature type="transmembrane region" description="Helical" evidence="2">
    <location>
        <begin position="411"/>
        <end position="431"/>
    </location>
</feature>
<feature type="transmembrane region" description="Helical" evidence="2">
    <location>
        <begin position="432"/>
        <end position="452"/>
    </location>
</feature>
<feature type="transmembrane region" description="Helical" evidence="2">
    <location>
        <begin position="460"/>
        <end position="480"/>
    </location>
</feature>
<feature type="transmembrane region" description="Helical" evidence="2">
    <location>
        <begin position="488"/>
        <end position="508"/>
    </location>
</feature>
<feature type="transmembrane region" description="Helical" evidence="2">
    <location>
        <begin position="530"/>
        <end position="550"/>
    </location>
</feature>
<feature type="transmembrane region" description="Helical" evidence="2">
    <location>
        <begin position="555"/>
        <end position="575"/>
    </location>
</feature>
<feature type="transmembrane region" description="Helical" evidence="2">
    <location>
        <begin position="584"/>
        <end position="604"/>
    </location>
</feature>
<feature type="region of interest" description="COX15/CtaA">
    <location>
        <begin position="1"/>
        <end position="338"/>
    </location>
</feature>
<feature type="region of interest" description="Protoheme IX prenyltransferase">
    <location>
        <begin position="339"/>
        <end position="608"/>
    </location>
</feature>
<evidence type="ECO:0000250" key="1"/>
<evidence type="ECO:0000255" key="2"/>
<evidence type="ECO:0000305" key="3"/>
<accession>Q5SLI3</accession>
<name>COXX_THET8</name>